<accession>P47774</accession>
<accession>Q8CAS2</accession>
<name>CCR7_MOUSE</name>
<feature type="signal peptide" evidence="2">
    <location>
        <begin position="1"/>
        <end position="24"/>
    </location>
</feature>
<feature type="chain" id="PRO_0000012736" description="C-C chemokine receptor type 7">
    <location>
        <begin position="25"/>
        <end position="378"/>
    </location>
</feature>
<feature type="topological domain" description="Extracellular" evidence="2">
    <location>
        <begin position="25"/>
        <end position="59"/>
    </location>
</feature>
<feature type="transmembrane region" description="Helical; Name=1" evidence="2">
    <location>
        <begin position="60"/>
        <end position="86"/>
    </location>
</feature>
<feature type="topological domain" description="Cytoplasmic" evidence="2">
    <location>
        <begin position="87"/>
        <end position="95"/>
    </location>
</feature>
<feature type="transmembrane region" description="Helical; Name=2" evidence="2">
    <location>
        <begin position="96"/>
        <end position="116"/>
    </location>
</feature>
<feature type="topological domain" description="Extracellular" evidence="2">
    <location>
        <begin position="117"/>
        <end position="130"/>
    </location>
</feature>
<feature type="transmembrane region" description="Helical; Name=3" evidence="2">
    <location>
        <begin position="131"/>
        <end position="152"/>
    </location>
</feature>
<feature type="topological domain" description="Cytoplasmic" evidence="2">
    <location>
        <begin position="153"/>
        <end position="170"/>
    </location>
</feature>
<feature type="transmembrane region" description="Helical; Name=4" evidence="2">
    <location>
        <begin position="171"/>
        <end position="191"/>
    </location>
</feature>
<feature type="topological domain" description="Extracellular" evidence="2">
    <location>
        <begin position="192"/>
        <end position="219"/>
    </location>
</feature>
<feature type="transmembrane region" description="Helical; Name=5" evidence="2">
    <location>
        <begin position="220"/>
        <end position="247"/>
    </location>
</feature>
<feature type="topological domain" description="Cytoplasmic" evidence="2">
    <location>
        <begin position="248"/>
        <end position="263"/>
    </location>
</feature>
<feature type="transmembrane region" description="Helical; Name=6" evidence="2">
    <location>
        <begin position="264"/>
        <end position="289"/>
    </location>
</feature>
<feature type="topological domain" description="Extracellular" evidence="2">
    <location>
        <begin position="290"/>
        <end position="313"/>
    </location>
</feature>
<feature type="transmembrane region" description="Helical; Name=7" evidence="2">
    <location>
        <begin position="314"/>
        <end position="331"/>
    </location>
</feature>
<feature type="topological domain" description="Cytoplasmic" evidence="2">
    <location>
        <begin position="332"/>
        <end position="378"/>
    </location>
</feature>
<feature type="glycosylation site" description="N-linked (GlcNAc...) asparagine" evidence="2">
    <location>
        <position position="36"/>
    </location>
</feature>
<feature type="disulfide bond" evidence="3">
    <location>
        <begin position="129"/>
        <end position="210"/>
    </location>
</feature>
<feature type="sequence conflict" description="In Ref. 1; AAA74232." evidence="4" ref="1">
    <original>A</original>
    <variation>R</variation>
    <location>
        <position position="164"/>
    </location>
</feature>
<keyword id="KW-1003">Cell membrane</keyword>
<keyword id="KW-1015">Disulfide bond</keyword>
<keyword id="KW-0297">G-protein coupled receptor</keyword>
<keyword id="KW-0325">Glycoprotein</keyword>
<keyword id="KW-0472">Membrane</keyword>
<keyword id="KW-0675">Receptor</keyword>
<keyword id="KW-1185">Reference proteome</keyword>
<keyword id="KW-0732">Signal</keyword>
<keyword id="KW-0807">Transducer</keyword>
<keyword id="KW-0812">Transmembrane</keyword>
<keyword id="KW-1133">Transmembrane helix</keyword>
<proteinExistence type="evidence at protein level"/>
<reference key="1">
    <citation type="journal article" date="1994" name="Genomics">
        <title>Cloning of human and mouse EBI1, a lymphoid-specific G-protein-coupled receptor encoded on human chromosome 17q12-q21.2.</title>
        <authorList>
            <person name="Schweickart V.L."/>
            <person name="Raport C.J."/>
            <person name="Godiska R."/>
            <person name="Byers M.G."/>
            <person name="Eddy R.L. Jr."/>
            <person name="Shows T.B."/>
            <person name="Gray P.W."/>
        </authorList>
    </citation>
    <scope>NUCLEOTIDE SEQUENCE [MRNA]</scope>
    <source>
        <strain>C57BL/6 X CBA</strain>
        <tissue>Thymus</tissue>
    </source>
</reference>
<reference key="2">
    <citation type="journal article" date="2005" name="Science">
        <title>The transcriptional landscape of the mammalian genome.</title>
        <authorList>
            <person name="Carninci P."/>
            <person name="Kasukawa T."/>
            <person name="Katayama S."/>
            <person name="Gough J."/>
            <person name="Frith M.C."/>
            <person name="Maeda N."/>
            <person name="Oyama R."/>
            <person name="Ravasi T."/>
            <person name="Lenhard B."/>
            <person name="Wells C."/>
            <person name="Kodzius R."/>
            <person name="Shimokawa K."/>
            <person name="Bajic V.B."/>
            <person name="Brenner S.E."/>
            <person name="Batalov S."/>
            <person name="Forrest A.R."/>
            <person name="Zavolan M."/>
            <person name="Davis M.J."/>
            <person name="Wilming L.G."/>
            <person name="Aidinis V."/>
            <person name="Allen J.E."/>
            <person name="Ambesi-Impiombato A."/>
            <person name="Apweiler R."/>
            <person name="Aturaliya R.N."/>
            <person name="Bailey T.L."/>
            <person name="Bansal M."/>
            <person name="Baxter L."/>
            <person name="Beisel K.W."/>
            <person name="Bersano T."/>
            <person name="Bono H."/>
            <person name="Chalk A.M."/>
            <person name="Chiu K.P."/>
            <person name="Choudhary V."/>
            <person name="Christoffels A."/>
            <person name="Clutterbuck D.R."/>
            <person name="Crowe M.L."/>
            <person name="Dalla E."/>
            <person name="Dalrymple B.P."/>
            <person name="de Bono B."/>
            <person name="Della Gatta G."/>
            <person name="di Bernardo D."/>
            <person name="Down T."/>
            <person name="Engstrom P."/>
            <person name="Fagiolini M."/>
            <person name="Faulkner G."/>
            <person name="Fletcher C.F."/>
            <person name="Fukushima T."/>
            <person name="Furuno M."/>
            <person name="Futaki S."/>
            <person name="Gariboldi M."/>
            <person name="Georgii-Hemming P."/>
            <person name="Gingeras T.R."/>
            <person name="Gojobori T."/>
            <person name="Green R.E."/>
            <person name="Gustincich S."/>
            <person name="Harbers M."/>
            <person name="Hayashi Y."/>
            <person name="Hensch T.K."/>
            <person name="Hirokawa N."/>
            <person name="Hill D."/>
            <person name="Huminiecki L."/>
            <person name="Iacono M."/>
            <person name="Ikeo K."/>
            <person name="Iwama A."/>
            <person name="Ishikawa T."/>
            <person name="Jakt M."/>
            <person name="Kanapin A."/>
            <person name="Katoh M."/>
            <person name="Kawasawa Y."/>
            <person name="Kelso J."/>
            <person name="Kitamura H."/>
            <person name="Kitano H."/>
            <person name="Kollias G."/>
            <person name="Krishnan S.P."/>
            <person name="Kruger A."/>
            <person name="Kummerfeld S.K."/>
            <person name="Kurochkin I.V."/>
            <person name="Lareau L.F."/>
            <person name="Lazarevic D."/>
            <person name="Lipovich L."/>
            <person name="Liu J."/>
            <person name="Liuni S."/>
            <person name="McWilliam S."/>
            <person name="Madan Babu M."/>
            <person name="Madera M."/>
            <person name="Marchionni L."/>
            <person name="Matsuda H."/>
            <person name="Matsuzawa S."/>
            <person name="Miki H."/>
            <person name="Mignone F."/>
            <person name="Miyake S."/>
            <person name="Morris K."/>
            <person name="Mottagui-Tabar S."/>
            <person name="Mulder N."/>
            <person name="Nakano N."/>
            <person name="Nakauchi H."/>
            <person name="Ng P."/>
            <person name="Nilsson R."/>
            <person name="Nishiguchi S."/>
            <person name="Nishikawa S."/>
            <person name="Nori F."/>
            <person name="Ohara O."/>
            <person name="Okazaki Y."/>
            <person name="Orlando V."/>
            <person name="Pang K.C."/>
            <person name="Pavan W.J."/>
            <person name="Pavesi G."/>
            <person name="Pesole G."/>
            <person name="Petrovsky N."/>
            <person name="Piazza S."/>
            <person name="Reed J."/>
            <person name="Reid J.F."/>
            <person name="Ring B.Z."/>
            <person name="Ringwald M."/>
            <person name="Rost B."/>
            <person name="Ruan Y."/>
            <person name="Salzberg S.L."/>
            <person name="Sandelin A."/>
            <person name="Schneider C."/>
            <person name="Schoenbach C."/>
            <person name="Sekiguchi K."/>
            <person name="Semple C.A."/>
            <person name="Seno S."/>
            <person name="Sessa L."/>
            <person name="Sheng Y."/>
            <person name="Shibata Y."/>
            <person name="Shimada H."/>
            <person name="Shimada K."/>
            <person name="Silva D."/>
            <person name="Sinclair B."/>
            <person name="Sperling S."/>
            <person name="Stupka E."/>
            <person name="Sugiura K."/>
            <person name="Sultana R."/>
            <person name="Takenaka Y."/>
            <person name="Taki K."/>
            <person name="Tammoja K."/>
            <person name="Tan S.L."/>
            <person name="Tang S."/>
            <person name="Taylor M.S."/>
            <person name="Tegner J."/>
            <person name="Teichmann S.A."/>
            <person name="Ueda H.R."/>
            <person name="van Nimwegen E."/>
            <person name="Verardo R."/>
            <person name="Wei C.L."/>
            <person name="Yagi K."/>
            <person name="Yamanishi H."/>
            <person name="Zabarovsky E."/>
            <person name="Zhu S."/>
            <person name="Zimmer A."/>
            <person name="Hide W."/>
            <person name="Bult C."/>
            <person name="Grimmond S.M."/>
            <person name="Teasdale R.D."/>
            <person name="Liu E.T."/>
            <person name="Brusic V."/>
            <person name="Quackenbush J."/>
            <person name="Wahlestedt C."/>
            <person name="Mattick J.S."/>
            <person name="Hume D.A."/>
            <person name="Kai C."/>
            <person name="Sasaki D."/>
            <person name="Tomaru Y."/>
            <person name="Fukuda S."/>
            <person name="Kanamori-Katayama M."/>
            <person name="Suzuki M."/>
            <person name="Aoki J."/>
            <person name="Arakawa T."/>
            <person name="Iida J."/>
            <person name="Imamura K."/>
            <person name="Itoh M."/>
            <person name="Kato T."/>
            <person name="Kawaji H."/>
            <person name="Kawagashira N."/>
            <person name="Kawashima T."/>
            <person name="Kojima M."/>
            <person name="Kondo S."/>
            <person name="Konno H."/>
            <person name="Nakano K."/>
            <person name="Ninomiya N."/>
            <person name="Nishio T."/>
            <person name="Okada M."/>
            <person name="Plessy C."/>
            <person name="Shibata K."/>
            <person name="Shiraki T."/>
            <person name="Suzuki S."/>
            <person name="Tagami M."/>
            <person name="Waki K."/>
            <person name="Watahiki A."/>
            <person name="Okamura-Oho Y."/>
            <person name="Suzuki H."/>
            <person name="Kawai J."/>
            <person name="Hayashizaki Y."/>
        </authorList>
    </citation>
    <scope>NUCLEOTIDE SEQUENCE [LARGE SCALE MRNA]</scope>
    <source>
        <strain>C57BL/6J</strain>
        <strain>NOD</strain>
        <tissue>Thymus</tissue>
    </source>
</reference>
<reference key="3">
    <citation type="journal article" date="2009" name="PLoS Biol.">
        <title>Lineage-specific biology revealed by a finished genome assembly of the mouse.</title>
        <authorList>
            <person name="Church D.M."/>
            <person name="Goodstadt L."/>
            <person name="Hillier L.W."/>
            <person name="Zody M.C."/>
            <person name="Goldstein S."/>
            <person name="She X."/>
            <person name="Bult C.J."/>
            <person name="Agarwala R."/>
            <person name="Cherry J.L."/>
            <person name="DiCuccio M."/>
            <person name="Hlavina W."/>
            <person name="Kapustin Y."/>
            <person name="Meric P."/>
            <person name="Maglott D."/>
            <person name="Birtle Z."/>
            <person name="Marques A.C."/>
            <person name="Graves T."/>
            <person name="Zhou S."/>
            <person name="Teague B."/>
            <person name="Potamousis K."/>
            <person name="Churas C."/>
            <person name="Place M."/>
            <person name="Herschleb J."/>
            <person name="Runnheim R."/>
            <person name="Forrest D."/>
            <person name="Amos-Landgraf J."/>
            <person name="Schwartz D.C."/>
            <person name="Cheng Z."/>
            <person name="Lindblad-Toh K."/>
            <person name="Eichler E.E."/>
            <person name="Ponting C.P."/>
        </authorList>
    </citation>
    <scope>NUCLEOTIDE SEQUENCE [LARGE SCALE GENOMIC DNA]</scope>
    <source>
        <strain>C57BL/6J</strain>
    </source>
</reference>
<reference key="4">
    <citation type="submission" date="2005-07" db="EMBL/GenBank/DDBJ databases">
        <authorList>
            <person name="Mural R.J."/>
            <person name="Adams M.D."/>
            <person name="Myers E.W."/>
            <person name="Smith H.O."/>
            <person name="Venter J.C."/>
        </authorList>
    </citation>
    <scope>NUCLEOTIDE SEQUENCE [LARGE SCALE GENOMIC DNA]</scope>
</reference>
<comment type="function">
    <text evidence="1">Receptor for the MIP-3-beta chemokine.</text>
</comment>
<comment type="interaction">
    <interactant intactId="EBI-8038963">
        <id>P47774</id>
    </interactant>
    <interactant intactId="EBI-1165705">
        <id>P20963</id>
        <label>CD247</label>
    </interactant>
    <organismsDiffer>true</organismsDiffer>
    <experiments>2</experiments>
</comment>
<comment type="subcellular location">
    <subcellularLocation>
        <location>Cell membrane</location>
        <topology>Multi-pass membrane protein</topology>
    </subcellularLocation>
</comment>
<comment type="similarity">
    <text evidence="3">Belongs to the G-protein coupled receptor 1 family.</text>
</comment>
<evidence type="ECO:0000250" key="1"/>
<evidence type="ECO:0000255" key="2"/>
<evidence type="ECO:0000255" key="3">
    <source>
        <dbReference type="PROSITE-ProRule" id="PRU00521"/>
    </source>
</evidence>
<evidence type="ECO:0000305" key="4"/>
<gene>
    <name type="primary">Ccr7</name>
    <name type="synonym">Cmkbr7</name>
    <name type="synonym">Ebi1</name>
    <name type="synonym">Ebi1h</name>
</gene>
<sequence length="378" mass="42856">MDPGKPRKNVLVVALLVIFQVCFCQDEVTDDYIGENTTVDYTLYESVCFKKDVRNFKAWFLPLMYSVICFVGLLGNGLVILTYIYFKRLKTMTDTYLLNLAVADILFLLILPFWAYSEAKSWIFGVYLCKGIFGIYKLSFFSGMLLLLCISIDRYVAIVQAVSAHRHRARVLLISKLSCVGIWMLALFLSIPELLYSGLQKNSGEDTLRCSLVSAQVEALITIQVAQMVFGFLVPMLAMSFCYLIIIRTLLQARNFERNKAIKVIIAVVVVFIVFQLPYNGVVLAQTVANFNITNSSCETSKQLNIAYDVTYSLASVRCCVNPFLYAFIGVKFRSDLFKLFKDLGCLSQERLRHWSSCRHVRNASVSMEAETTTTFSP</sequence>
<organism>
    <name type="scientific">Mus musculus</name>
    <name type="common">Mouse</name>
    <dbReference type="NCBI Taxonomy" id="10090"/>
    <lineage>
        <taxon>Eukaryota</taxon>
        <taxon>Metazoa</taxon>
        <taxon>Chordata</taxon>
        <taxon>Craniata</taxon>
        <taxon>Vertebrata</taxon>
        <taxon>Euteleostomi</taxon>
        <taxon>Mammalia</taxon>
        <taxon>Eutheria</taxon>
        <taxon>Euarchontoglires</taxon>
        <taxon>Glires</taxon>
        <taxon>Rodentia</taxon>
        <taxon>Myomorpha</taxon>
        <taxon>Muroidea</taxon>
        <taxon>Muridae</taxon>
        <taxon>Murinae</taxon>
        <taxon>Mus</taxon>
        <taxon>Mus</taxon>
    </lineage>
</organism>
<dbReference type="EMBL" id="L31580">
    <property type="protein sequence ID" value="AAA74232.1"/>
    <property type="molecule type" value="mRNA"/>
</dbReference>
<dbReference type="EMBL" id="AK037965">
    <property type="protein sequence ID" value="BAC29909.1"/>
    <property type="molecule type" value="mRNA"/>
</dbReference>
<dbReference type="EMBL" id="AK154349">
    <property type="protein sequence ID" value="BAE32532.1"/>
    <property type="molecule type" value="mRNA"/>
</dbReference>
<dbReference type="EMBL" id="AK154849">
    <property type="protein sequence ID" value="BAE32875.1"/>
    <property type="molecule type" value="mRNA"/>
</dbReference>
<dbReference type="EMBL" id="AL591366">
    <property type="status" value="NOT_ANNOTATED_CDS"/>
    <property type="molecule type" value="Genomic_DNA"/>
</dbReference>
<dbReference type="EMBL" id="CH466556">
    <property type="protein sequence ID" value="EDL16180.1"/>
    <property type="molecule type" value="Genomic_DNA"/>
</dbReference>
<dbReference type="CCDS" id="CCDS25373.1"/>
<dbReference type="PIR" id="A55735">
    <property type="entry name" value="A55735"/>
</dbReference>
<dbReference type="RefSeq" id="NP_001288642.1">
    <property type="nucleotide sequence ID" value="NM_001301713.1"/>
</dbReference>
<dbReference type="RefSeq" id="NP_031745.2">
    <property type="nucleotide sequence ID" value="NM_007719.2"/>
</dbReference>
<dbReference type="SMR" id="P47774"/>
<dbReference type="FunCoup" id="P47774">
    <property type="interactions" value="605"/>
</dbReference>
<dbReference type="IntAct" id="P47774">
    <property type="interactions" value="1"/>
</dbReference>
<dbReference type="MINT" id="P47774"/>
<dbReference type="STRING" id="10090.ENSMUSP00000099423"/>
<dbReference type="GlyCosmos" id="P47774">
    <property type="glycosylation" value="1 site, No reported glycans"/>
</dbReference>
<dbReference type="GlyGen" id="P47774">
    <property type="glycosylation" value="1 site"/>
</dbReference>
<dbReference type="PhosphoSitePlus" id="P47774"/>
<dbReference type="PaxDb" id="10090-ENSMUSP00000099423"/>
<dbReference type="ProteomicsDB" id="279951"/>
<dbReference type="Antibodypedia" id="3533">
    <property type="antibodies" value="1140 antibodies from 48 providers"/>
</dbReference>
<dbReference type="DNASU" id="12775"/>
<dbReference type="Ensembl" id="ENSMUST00000103134.4">
    <property type="protein sequence ID" value="ENSMUSP00000099423.4"/>
    <property type="gene ID" value="ENSMUSG00000037944.9"/>
</dbReference>
<dbReference type="GeneID" id="12775"/>
<dbReference type="KEGG" id="mmu:12775"/>
<dbReference type="UCSC" id="uc007lih.1">
    <property type="organism name" value="mouse"/>
</dbReference>
<dbReference type="AGR" id="MGI:103011"/>
<dbReference type="CTD" id="1236"/>
<dbReference type="MGI" id="MGI:103011">
    <property type="gene designation" value="Ccr7"/>
</dbReference>
<dbReference type="VEuPathDB" id="HostDB:ENSMUSG00000037944"/>
<dbReference type="eggNOG" id="ENOG502QUZ9">
    <property type="taxonomic scope" value="Eukaryota"/>
</dbReference>
<dbReference type="GeneTree" id="ENSGT01030000234667"/>
<dbReference type="HOGENOM" id="CLU_009579_8_3_1"/>
<dbReference type="InParanoid" id="P47774"/>
<dbReference type="OMA" id="TLACFRC"/>
<dbReference type="OrthoDB" id="9944829at2759"/>
<dbReference type="PhylomeDB" id="P47774"/>
<dbReference type="TreeFam" id="TF330966"/>
<dbReference type="Reactome" id="R-MMU-380108">
    <property type="pathway name" value="Chemokine receptors bind chemokines"/>
</dbReference>
<dbReference type="Reactome" id="R-MMU-418594">
    <property type="pathway name" value="G alpha (i) signalling events"/>
</dbReference>
<dbReference type="BioGRID-ORCS" id="12775">
    <property type="hits" value="3 hits in 81 CRISPR screens"/>
</dbReference>
<dbReference type="PRO" id="PR:P47774"/>
<dbReference type="Proteomes" id="UP000000589">
    <property type="component" value="Chromosome 11"/>
</dbReference>
<dbReference type="RNAct" id="P47774">
    <property type="molecule type" value="protein"/>
</dbReference>
<dbReference type="Bgee" id="ENSMUSG00000037944">
    <property type="expression patterns" value="Expressed in peripheral lymph node and 55 other cell types or tissues"/>
</dbReference>
<dbReference type="GO" id="GO:0009986">
    <property type="term" value="C:cell surface"/>
    <property type="evidence" value="ECO:0000314"/>
    <property type="project" value="MGI"/>
</dbReference>
<dbReference type="GO" id="GO:0009897">
    <property type="term" value="C:external side of plasma membrane"/>
    <property type="evidence" value="ECO:0000314"/>
    <property type="project" value="MGI"/>
</dbReference>
<dbReference type="GO" id="GO:0005739">
    <property type="term" value="C:mitochondrion"/>
    <property type="evidence" value="ECO:0007669"/>
    <property type="project" value="Ensembl"/>
</dbReference>
<dbReference type="GO" id="GO:0005886">
    <property type="term" value="C:plasma membrane"/>
    <property type="evidence" value="ECO:0000314"/>
    <property type="project" value="BHF-UCL"/>
</dbReference>
<dbReference type="GO" id="GO:0016493">
    <property type="term" value="F:C-C chemokine receptor activity"/>
    <property type="evidence" value="ECO:0000315"/>
    <property type="project" value="BHF-UCL"/>
</dbReference>
<dbReference type="GO" id="GO:0038117">
    <property type="term" value="F:C-C motif chemokine 19 receptor activity"/>
    <property type="evidence" value="ECO:0007669"/>
    <property type="project" value="Ensembl"/>
</dbReference>
<dbReference type="GO" id="GO:0038121">
    <property type="term" value="F:C-C motif chemokine 21 receptor activity"/>
    <property type="evidence" value="ECO:0007669"/>
    <property type="project" value="Ensembl"/>
</dbReference>
<dbReference type="GO" id="GO:0035757">
    <property type="term" value="F:chemokine (C-C motif) ligand 19 binding"/>
    <property type="evidence" value="ECO:0000250"/>
    <property type="project" value="BHF-UCL"/>
</dbReference>
<dbReference type="GO" id="GO:0035758">
    <property type="term" value="F:chemokine (C-C motif) ligand 21 binding"/>
    <property type="evidence" value="ECO:0000250"/>
    <property type="project" value="BHF-UCL"/>
</dbReference>
<dbReference type="GO" id="GO:0004930">
    <property type="term" value="F:G protein-coupled receptor activity"/>
    <property type="evidence" value="ECO:0000304"/>
    <property type="project" value="BHF-UCL"/>
</dbReference>
<dbReference type="GO" id="GO:0030036">
    <property type="term" value="P:actin cytoskeleton organization"/>
    <property type="evidence" value="ECO:0000304"/>
    <property type="project" value="BHF-UCL"/>
</dbReference>
<dbReference type="GO" id="GO:0038119">
    <property type="term" value="P:CCL19-activated CCR7 signaling pathway"/>
    <property type="evidence" value="ECO:0000314"/>
    <property type="project" value="BHF-UCL"/>
</dbReference>
<dbReference type="GO" id="GO:0038120">
    <property type="term" value="P:CCL21-activated CCR7 signaling pathway"/>
    <property type="evidence" value="ECO:0007669"/>
    <property type="project" value="Ensembl"/>
</dbReference>
<dbReference type="GO" id="GO:0071380">
    <property type="term" value="P:cellular response to prostaglandin E stimulus"/>
    <property type="evidence" value="ECO:0007669"/>
    <property type="project" value="Ensembl"/>
</dbReference>
<dbReference type="GO" id="GO:0006935">
    <property type="term" value="P:chemotaxis"/>
    <property type="evidence" value="ECO:0000315"/>
    <property type="project" value="MGI"/>
</dbReference>
<dbReference type="GO" id="GO:0001768">
    <property type="term" value="P:establishment of T cell polarity"/>
    <property type="evidence" value="ECO:0000304"/>
    <property type="project" value="BHF-UCL"/>
</dbReference>
<dbReference type="GO" id="GO:0048872">
    <property type="term" value="P:homeostasis of number of cells"/>
    <property type="evidence" value="ECO:0000315"/>
    <property type="project" value="MGI"/>
</dbReference>
<dbReference type="GO" id="GO:0006955">
    <property type="term" value="P:immune response"/>
    <property type="evidence" value="ECO:0000315"/>
    <property type="project" value="MGI"/>
</dbReference>
<dbReference type="GO" id="GO:0006954">
    <property type="term" value="P:inflammatory response"/>
    <property type="evidence" value="ECO:0000304"/>
    <property type="project" value="BHF-UCL"/>
</dbReference>
<dbReference type="GO" id="GO:0048535">
    <property type="term" value="P:lymph node development"/>
    <property type="evidence" value="ECO:0000304"/>
    <property type="project" value="BHF-UCL"/>
</dbReference>
<dbReference type="GO" id="GO:0002518">
    <property type="term" value="P:lymphocyte chemotaxis across high endothelial venule"/>
    <property type="evidence" value="ECO:0000304"/>
    <property type="project" value="BHF-UCL"/>
</dbReference>
<dbReference type="GO" id="GO:0097022">
    <property type="term" value="P:lymphocyte migration into lymph node"/>
    <property type="evidence" value="ECO:0000304"/>
    <property type="project" value="BHF-UCL"/>
</dbReference>
<dbReference type="GO" id="GO:0097029">
    <property type="term" value="P:mature conventional dendritic cell differentiation"/>
    <property type="evidence" value="ECO:0000315"/>
    <property type="project" value="BHF-UCL"/>
</dbReference>
<dbReference type="GO" id="GO:0002408">
    <property type="term" value="P:myeloid dendritic cell chemotaxis"/>
    <property type="evidence" value="ECO:0007669"/>
    <property type="project" value="Ensembl"/>
</dbReference>
<dbReference type="GO" id="GO:0032695">
    <property type="term" value="P:negative regulation of interleukin-12 production"/>
    <property type="evidence" value="ECO:0000315"/>
    <property type="project" value="BHF-UCL"/>
</dbReference>
<dbReference type="GO" id="GO:2000107">
    <property type="term" value="P:negative regulation of leukocyte apoptotic process"/>
    <property type="evidence" value="ECO:0000304"/>
    <property type="project" value="BHF-UCL"/>
</dbReference>
<dbReference type="GO" id="GO:0045060">
    <property type="term" value="P:negative thymic T cell selection"/>
    <property type="evidence" value="ECO:0000315"/>
    <property type="project" value="BHF-UCL"/>
</dbReference>
<dbReference type="GO" id="GO:2000147">
    <property type="term" value="P:positive regulation of cell motility"/>
    <property type="evidence" value="ECO:0000304"/>
    <property type="project" value="BHF-UCL"/>
</dbReference>
<dbReference type="GO" id="GO:0002606">
    <property type="term" value="P:positive regulation of dendritic cell antigen processing and presentation"/>
    <property type="evidence" value="ECO:0000314"/>
    <property type="project" value="BHF-UCL"/>
</dbReference>
<dbReference type="GO" id="GO:2000510">
    <property type="term" value="P:positive regulation of dendritic cell chemotaxis"/>
    <property type="evidence" value="ECO:0000315"/>
    <property type="project" value="BHF-UCL"/>
</dbReference>
<dbReference type="GO" id="GO:0051491">
    <property type="term" value="P:positive regulation of filopodium assembly"/>
    <property type="evidence" value="ECO:0000304"/>
    <property type="project" value="BHF-UCL"/>
</dbReference>
<dbReference type="GO" id="GO:2000526">
    <property type="term" value="P:positive regulation of glycoprotein biosynthetic process involved in immunological synapse formation"/>
    <property type="evidence" value="ECO:0000315"/>
    <property type="project" value="BHF-UCL"/>
</dbReference>
<dbReference type="GO" id="GO:0002922">
    <property type="term" value="P:positive regulation of humoral immune response"/>
    <property type="evidence" value="ECO:0000315"/>
    <property type="project" value="BHF-UCL"/>
</dbReference>
<dbReference type="GO" id="GO:0002885">
    <property type="term" value="P:positive regulation of hypersensitivity"/>
    <property type="evidence" value="ECO:0000315"/>
    <property type="project" value="BHF-UCL"/>
</dbReference>
<dbReference type="GO" id="GO:2000522">
    <property type="term" value="P:positive regulation of immunological synapse formation"/>
    <property type="evidence" value="ECO:0000315"/>
    <property type="project" value="BHF-UCL"/>
</dbReference>
<dbReference type="GO" id="GO:0032731">
    <property type="term" value="P:positive regulation of interleukin-1 beta production"/>
    <property type="evidence" value="ECO:0000305"/>
    <property type="project" value="BHF-UCL"/>
</dbReference>
<dbReference type="GO" id="GO:0032735">
    <property type="term" value="P:positive regulation of interleukin-12 production"/>
    <property type="evidence" value="ECO:0000315"/>
    <property type="project" value="BHF-UCL"/>
</dbReference>
<dbReference type="GO" id="GO:0046330">
    <property type="term" value="P:positive regulation of JNK cascade"/>
    <property type="evidence" value="ECO:0000305"/>
    <property type="project" value="BHF-UCL"/>
</dbReference>
<dbReference type="GO" id="GO:0010759">
    <property type="term" value="P:positive regulation of macrophage chemotaxis"/>
    <property type="evidence" value="ECO:0000303"/>
    <property type="project" value="BHF-UCL"/>
</dbReference>
<dbReference type="GO" id="GO:0090023">
    <property type="term" value="P:positive regulation of neutrophil chemotaxis"/>
    <property type="evidence" value="ECO:0000315"/>
    <property type="project" value="BHF-UCL"/>
</dbReference>
<dbReference type="GO" id="GO:0050766">
    <property type="term" value="P:positive regulation of phagocytosis"/>
    <property type="evidence" value="ECO:0000303"/>
    <property type="project" value="BHF-UCL"/>
</dbReference>
<dbReference type="GO" id="GO:0051897">
    <property type="term" value="P:positive regulation of phosphatidylinositol 3-kinase/protein kinase B signal transduction"/>
    <property type="evidence" value="ECO:0007669"/>
    <property type="project" value="Ensembl"/>
</dbReference>
<dbReference type="GO" id="GO:0141214">
    <property type="term" value="P:positive regulation of phospholipase C/protein kinase C signal transduction"/>
    <property type="evidence" value="ECO:0007669"/>
    <property type="project" value="Ensembl"/>
</dbReference>
<dbReference type="GO" id="GO:0035022">
    <property type="term" value="P:positive regulation of Rac protein signal transduction"/>
    <property type="evidence" value="ECO:0000314"/>
    <property type="project" value="BHF-UCL"/>
</dbReference>
<dbReference type="GO" id="GO:0048260">
    <property type="term" value="P:positive regulation of receptor-mediated endocytosis"/>
    <property type="evidence" value="ECO:0000314"/>
    <property type="project" value="BHF-UCL"/>
</dbReference>
<dbReference type="GO" id="GO:0010820">
    <property type="term" value="P:positive regulation of T cell chemotaxis"/>
    <property type="evidence" value="ECO:0000304"/>
    <property type="project" value="BHF-UCL"/>
</dbReference>
<dbReference type="GO" id="GO:2000525">
    <property type="term" value="P:positive regulation of T cell costimulation"/>
    <property type="evidence" value="ECO:0000315"/>
    <property type="project" value="BHF-UCL"/>
</dbReference>
<dbReference type="GO" id="GO:0042102">
    <property type="term" value="P:positive regulation of T cell proliferation"/>
    <property type="evidence" value="ECO:0000305"/>
    <property type="project" value="BHF-UCL"/>
</dbReference>
<dbReference type="GO" id="GO:0050862">
    <property type="term" value="P:positive regulation of T cell receptor signaling pathway"/>
    <property type="evidence" value="ECO:0000315"/>
    <property type="project" value="BHF-UCL"/>
</dbReference>
<dbReference type="GO" id="GO:0045627">
    <property type="term" value="P:positive regulation of T-helper 1 cell differentiation"/>
    <property type="evidence" value="ECO:0000305"/>
    <property type="project" value="BHF-UCL"/>
</dbReference>
<dbReference type="GO" id="GO:2000412">
    <property type="term" value="P:positive regulation of thymocyte migration"/>
    <property type="evidence" value="ECO:0000304"/>
    <property type="project" value="BHF-UCL"/>
</dbReference>
<dbReference type="GO" id="GO:0032760">
    <property type="term" value="P:positive regulation of tumor necrosis factor production"/>
    <property type="evidence" value="ECO:0000305"/>
    <property type="project" value="BHF-UCL"/>
</dbReference>
<dbReference type="GO" id="GO:0032489">
    <property type="term" value="P:regulation of Cdc42 protein signal transduction"/>
    <property type="evidence" value="ECO:0000314"/>
    <property type="project" value="BHF-UCL"/>
</dbReference>
<dbReference type="GO" id="GO:2000547">
    <property type="term" value="P:regulation of dendritic cell dendrite assembly"/>
    <property type="evidence" value="ECO:0000305"/>
    <property type="project" value="BHF-UCL"/>
</dbReference>
<dbReference type="GO" id="GO:0032651">
    <property type="term" value="P:regulation of interleukin-1 beta production"/>
    <property type="evidence" value="ECO:0000315"/>
    <property type="project" value="BHF-UCL"/>
</dbReference>
<dbReference type="GO" id="GO:0002649">
    <property type="term" value="P:regulation of tolerance induction to self antigen"/>
    <property type="evidence" value="ECO:0000304"/>
    <property type="project" value="BHF-UCL"/>
</dbReference>
<dbReference type="GO" id="GO:0032649">
    <property type="term" value="P:regulation of type II interferon production"/>
    <property type="evidence" value="ECO:0000315"/>
    <property type="project" value="BHF-UCL"/>
</dbReference>
<dbReference type="GO" id="GO:0051209">
    <property type="term" value="P:release of sequestered calcium ion into cytosol"/>
    <property type="evidence" value="ECO:0007669"/>
    <property type="project" value="Ensembl"/>
</dbReference>
<dbReference type="GO" id="GO:0032496">
    <property type="term" value="P:response to lipopolysaccharide"/>
    <property type="evidence" value="ECO:0000314"/>
    <property type="project" value="BHF-UCL"/>
</dbReference>
<dbReference type="GO" id="GO:0071731">
    <property type="term" value="P:response to nitric oxide"/>
    <property type="evidence" value="ECO:0000304"/>
    <property type="project" value="BHF-UCL"/>
</dbReference>
<dbReference type="GO" id="GO:0034695">
    <property type="term" value="P:response to prostaglandin E"/>
    <property type="evidence" value="ECO:0000304"/>
    <property type="project" value="BHF-UCL"/>
</dbReference>
<dbReference type="FunFam" id="1.20.1070.10:FF:000035">
    <property type="entry name" value="C-C chemokine receptor type 6"/>
    <property type="match status" value="1"/>
</dbReference>
<dbReference type="Gene3D" id="1.20.1070.10">
    <property type="entry name" value="Rhodopsin 7-helix transmembrane proteins"/>
    <property type="match status" value="1"/>
</dbReference>
<dbReference type="InterPro" id="IPR050119">
    <property type="entry name" value="CCR1-9-like"/>
</dbReference>
<dbReference type="InterPro" id="IPR001718">
    <property type="entry name" value="Chemokine_CCR7"/>
</dbReference>
<dbReference type="InterPro" id="IPR000355">
    <property type="entry name" value="Chemokine_rcpt"/>
</dbReference>
<dbReference type="InterPro" id="IPR000276">
    <property type="entry name" value="GPCR_Rhodpsn"/>
</dbReference>
<dbReference type="InterPro" id="IPR017452">
    <property type="entry name" value="GPCR_Rhodpsn_7TM"/>
</dbReference>
<dbReference type="PANTHER" id="PTHR10489:SF635">
    <property type="entry name" value="C-C CHEMOKINE RECEPTOR TYPE 7"/>
    <property type="match status" value="1"/>
</dbReference>
<dbReference type="PANTHER" id="PTHR10489">
    <property type="entry name" value="CELL ADHESION MOLECULE"/>
    <property type="match status" value="1"/>
</dbReference>
<dbReference type="Pfam" id="PF00001">
    <property type="entry name" value="7tm_1"/>
    <property type="match status" value="1"/>
</dbReference>
<dbReference type="PRINTS" id="PR00657">
    <property type="entry name" value="CCCHEMOKINER"/>
</dbReference>
<dbReference type="PRINTS" id="PR00641">
    <property type="entry name" value="CHEMOKINER7"/>
</dbReference>
<dbReference type="PRINTS" id="PR00237">
    <property type="entry name" value="GPCRRHODOPSN"/>
</dbReference>
<dbReference type="SUPFAM" id="SSF81321">
    <property type="entry name" value="Family A G protein-coupled receptor-like"/>
    <property type="match status" value="1"/>
</dbReference>
<dbReference type="PROSITE" id="PS00237">
    <property type="entry name" value="G_PROTEIN_RECEP_F1_1"/>
    <property type="match status" value="1"/>
</dbReference>
<dbReference type="PROSITE" id="PS50262">
    <property type="entry name" value="G_PROTEIN_RECEP_F1_2"/>
    <property type="match status" value="1"/>
</dbReference>
<protein>
    <recommendedName>
        <fullName>C-C chemokine receptor type 7</fullName>
        <shortName>C-C CKR-7</shortName>
        <shortName>CC-CKR-7</shortName>
        <shortName>CCR-7</shortName>
    </recommendedName>
    <alternativeName>
        <fullName>Epstein-Barr virus-induced G-protein coupled receptor 1</fullName>
        <shortName>EBI1</shortName>
        <shortName>EBV-induced G-protein coupled receptor 1</shortName>
    </alternativeName>
    <alternativeName>
        <fullName>MIP-3 beta receptor</fullName>
    </alternativeName>
    <cdAntigenName>CD197</cdAntigenName>
</protein>